<dbReference type="GO" id="GO:0005576">
    <property type="term" value="C:extracellular region"/>
    <property type="evidence" value="ECO:0007669"/>
    <property type="project" value="UniProtKB-SubCell"/>
</dbReference>
<dbReference type="GO" id="GO:0007218">
    <property type="term" value="P:neuropeptide signaling pathway"/>
    <property type="evidence" value="ECO:0007669"/>
    <property type="project" value="UniProtKB-KW"/>
</dbReference>
<dbReference type="InterPro" id="IPR013231">
    <property type="entry name" value="Periviscerokinin"/>
</dbReference>
<dbReference type="Pfam" id="PF08259">
    <property type="entry name" value="Periviscerokin"/>
    <property type="match status" value="1"/>
</dbReference>
<name>PVK2_SYMPA</name>
<evidence type="ECO:0000255" key="1"/>
<evidence type="ECO:0000269" key="2">
    <source>
    </source>
</evidence>
<evidence type="ECO:0000303" key="3">
    <source>
    </source>
</evidence>
<evidence type="ECO:0000305" key="4"/>
<protein>
    <recommendedName>
        <fullName evidence="3">Periviscerokinin-2</fullName>
        <shortName evidence="3">SymPa-PVK-2</shortName>
    </recommendedName>
</protein>
<proteinExistence type="evidence at protein level"/>
<accession>P85782</accession>
<reference evidence="4" key="1">
    <citation type="journal article" date="2009" name="BMC Evol. Biol.">
        <title>A proteomic approach for studying insect phylogeny: CAPA peptides of ancient insect taxa (Dictyoptera, Blattoptera) as a test case.</title>
        <authorList>
            <person name="Roth S."/>
            <person name="Fromm B."/>
            <person name="Gaede G."/>
            <person name="Predel R."/>
        </authorList>
    </citation>
    <scope>PROTEIN SEQUENCE</scope>
    <scope>AMIDATION AT VAL-11</scope>
    <source>
        <tissue evidence="2">Abdominal perisympathetic organs</tissue>
    </source>
</reference>
<comment type="function">
    <text evidence="4">Mediates visceral muscle contractile activity (myotropic activity).</text>
</comment>
<comment type="subcellular location">
    <subcellularLocation>
        <location evidence="4">Secreted</location>
    </subcellularLocation>
</comment>
<comment type="similarity">
    <text evidence="1">Belongs to the periviscerokinin family.</text>
</comment>
<organism>
    <name type="scientific">Symploce pallens</name>
    <name type="common">Smooth cockroach</name>
    <name type="synonym">Symploce capitata</name>
    <dbReference type="NCBI Taxonomy" id="36974"/>
    <lineage>
        <taxon>Eukaryota</taxon>
        <taxon>Metazoa</taxon>
        <taxon>Ecdysozoa</taxon>
        <taxon>Arthropoda</taxon>
        <taxon>Hexapoda</taxon>
        <taxon>Insecta</taxon>
        <taxon>Pterygota</taxon>
        <taxon>Neoptera</taxon>
        <taxon>Polyneoptera</taxon>
        <taxon>Dictyoptera</taxon>
        <taxon>Blattodea</taxon>
        <taxon>Blaberoidea</taxon>
        <taxon>Blattellidae</taxon>
        <taxon>Symploce</taxon>
    </lineage>
</organism>
<keyword id="KW-0027">Amidation</keyword>
<keyword id="KW-0903">Direct protein sequencing</keyword>
<keyword id="KW-0527">Neuropeptide</keyword>
<keyword id="KW-0964">Secreted</keyword>
<sequence length="11" mass="1103">GSSGLISMPRV</sequence>
<feature type="peptide" id="PRO_0000378814" description="Periviscerokinin-2" evidence="2">
    <location>
        <begin position="1"/>
        <end position="11"/>
    </location>
</feature>
<feature type="modified residue" description="Valine amide" evidence="2">
    <location>
        <position position="11"/>
    </location>
</feature>